<reference evidence="4" key="1">
    <citation type="journal article" date="2001" name="Science">
        <title>Genome sequence of the plant pathogen and biotechnology agent Agrobacterium tumefaciens C58.</title>
        <authorList>
            <person name="Goodner B."/>
            <person name="Hinkle G."/>
            <person name="Gattung S."/>
            <person name="Miller N."/>
            <person name="Blanchard M."/>
            <person name="Qurollo B."/>
            <person name="Goldman B.S."/>
            <person name="Cao Y."/>
            <person name="Askenazi M."/>
            <person name="Halling C."/>
            <person name="Mullin L."/>
            <person name="Houmiel K."/>
            <person name="Gordon J."/>
            <person name="Vaudin M."/>
            <person name="Iartchouk O."/>
            <person name="Epp A."/>
            <person name="Liu F."/>
            <person name="Wollam C."/>
            <person name="Allinger M."/>
            <person name="Doughty D."/>
            <person name="Scott C."/>
            <person name="Lappas C."/>
            <person name="Markelz B."/>
            <person name="Flanagan C."/>
            <person name="Crowell C."/>
            <person name="Gurson J."/>
            <person name="Lomo C."/>
            <person name="Sear C."/>
            <person name="Strub G."/>
            <person name="Cielo C."/>
            <person name="Slater S."/>
        </authorList>
    </citation>
    <scope>NUCLEOTIDE SEQUENCE [LARGE SCALE GENOMIC DNA]</scope>
    <source>
        <strain>C58 / ATCC 33970</strain>
    </source>
</reference>
<reference evidence="3" key="2">
    <citation type="journal article" date="2007" name="Biochemistry">
        <title>Structure and specificity of a quorum-quenching lactonase (AiiB) from Agrobacterium tumefaciens.</title>
        <authorList>
            <person name="Liu D."/>
            <person name="Thomas P.W."/>
            <person name="Momb J."/>
            <person name="Hoang Q.Q."/>
            <person name="Petsko G.A."/>
            <person name="Ringe D."/>
            <person name="Fast W."/>
        </authorList>
    </citation>
    <scope>X-RAY CRYSTALLOGRAPHY (1.75 ANGSTROMS) IN COMPLEX WITH ZINC</scope>
    <scope>CATALYTIC ACTIVITY</scope>
    <scope>COFACTOR</scope>
    <scope>BIOPHYSICOCHEMICAL PROPERTIES</scope>
</reference>
<feature type="chain" id="PRO_0000405125" description="N-acyl homoserine lactonase AiiB">
    <location>
        <begin position="1"/>
        <end position="276"/>
    </location>
</feature>
<feature type="binding site" evidence="1">
    <location>
        <position position="111"/>
    </location>
    <ligand>
        <name>Zn(2+)</name>
        <dbReference type="ChEBI" id="CHEBI:29105"/>
        <label>1</label>
    </ligand>
</feature>
<feature type="binding site" evidence="1">
    <location>
        <position position="113"/>
    </location>
    <ligand>
        <name>Zn(2+)</name>
        <dbReference type="ChEBI" id="CHEBI:29105"/>
        <label>1</label>
    </ligand>
</feature>
<feature type="binding site" evidence="1">
    <location>
        <position position="116"/>
    </location>
    <ligand>
        <name>Zn(2+)</name>
        <dbReference type="ChEBI" id="CHEBI:29105"/>
        <label>2</label>
    </ligand>
</feature>
<feature type="binding site" evidence="1">
    <location>
        <position position="191"/>
    </location>
    <ligand>
        <name>Zn(2+)</name>
        <dbReference type="ChEBI" id="CHEBI:29105"/>
        <label>1</label>
    </ligand>
</feature>
<feature type="binding site" evidence="1">
    <location>
        <position position="213"/>
    </location>
    <ligand>
        <name>Zn(2+)</name>
        <dbReference type="ChEBI" id="CHEBI:29105"/>
        <label>1</label>
    </ligand>
</feature>
<feature type="binding site" evidence="1">
    <location>
        <position position="213"/>
    </location>
    <ligand>
        <name>Zn(2+)</name>
        <dbReference type="ChEBI" id="CHEBI:29105"/>
        <label>2</label>
    </ligand>
</feature>
<feature type="binding site" evidence="1">
    <location>
        <position position="259"/>
    </location>
    <ligand>
        <name>Zn(2+)</name>
        <dbReference type="ChEBI" id="CHEBI:29105"/>
        <label>2</label>
    </ligand>
</feature>
<feature type="strand" evidence="5">
    <location>
        <begin position="4"/>
        <end position="16"/>
    </location>
</feature>
<feature type="helix" evidence="5">
    <location>
        <begin position="17"/>
        <end position="20"/>
    </location>
</feature>
<feature type="strand" evidence="5">
    <location>
        <begin position="29"/>
        <end position="31"/>
    </location>
</feature>
<feature type="strand" evidence="5">
    <location>
        <begin position="38"/>
        <end position="49"/>
    </location>
</feature>
<feature type="strand" evidence="5">
    <location>
        <begin position="54"/>
        <end position="57"/>
    </location>
</feature>
<feature type="helix" evidence="5">
    <location>
        <begin position="74"/>
        <end position="79"/>
    </location>
</feature>
<feature type="helix" evidence="5">
    <location>
        <begin position="90"/>
        <end position="96"/>
    </location>
</feature>
<feature type="helix" evidence="5">
    <location>
        <begin position="101"/>
        <end position="103"/>
    </location>
</feature>
<feature type="strand" evidence="5">
    <location>
        <begin position="105"/>
        <end position="108"/>
    </location>
</feature>
<feature type="turn" evidence="5">
    <location>
        <begin position="114"/>
        <end position="116"/>
    </location>
</feature>
<feature type="helix" evidence="5">
    <location>
        <begin position="120"/>
        <end position="122"/>
    </location>
</feature>
<feature type="strand" evidence="5">
    <location>
        <begin position="124"/>
        <end position="131"/>
    </location>
</feature>
<feature type="helix" evidence="5">
    <location>
        <begin position="132"/>
        <end position="143"/>
    </location>
</feature>
<feature type="strand" evidence="5">
    <location>
        <begin position="148"/>
        <end position="151"/>
    </location>
</feature>
<feature type="helix" evidence="5">
    <location>
        <begin position="153"/>
        <end position="159"/>
    </location>
</feature>
<feature type="strand" evidence="5">
    <location>
        <begin position="166"/>
        <end position="169"/>
    </location>
</feature>
<feature type="strand" evidence="5">
    <location>
        <begin position="175"/>
        <end position="179"/>
    </location>
</feature>
<feature type="strand" evidence="5">
    <location>
        <begin position="182"/>
        <end position="201"/>
    </location>
</feature>
<feature type="strand" evidence="5">
    <location>
        <begin position="203"/>
        <end position="205"/>
    </location>
</feature>
<feature type="strand" evidence="5">
    <location>
        <begin position="207"/>
        <end position="212"/>
    </location>
</feature>
<feature type="helix" evidence="5">
    <location>
        <begin position="218"/>
        <end position="221"/>
    </location>
</feature>
<feature type="strand" evidence="5">
    <location>
        <begin position="222"/>
        <end position="224"/>
    </location>
</feature>
<feature type="helix" evidence="5">
    <location>
        <begin position="234"/>
        <end position="250"/>
    </location>
</feature>
<feature type="strand" evidence="5">
    <location>
        <begin position="254"/>
        <end position="259"/>
    </location>
</feature>
<feature type="helix" evidence="5">
    <location>
        <begin position="261"/>
        <end position="266"/>
    </location>
</feature>
<feature type="turn" evidence="5">
    <location>
        <begin position="270"/>
        <end position="272"/>
    </location>
</feature>
<evidence type="ECO:0000269" key="1">
    <source>
    </source>
</evidence>
<evidence type="ECO:0000303" key="2">
    <source>
    </source>
</evidence>
<evidence type="ECO:0000305" key="3"/>
<evidence type="ECO:0000312" key="4">
    <source>
        <dbReference type="EMBL" id="AAK91031.1"/>
    </source>
</evidence>
<evidence type="ECO:0007829" key="5">
    <source>
        <dbReference type="PDB" id="2R2D"/>
    </source>
</evidence>
<gene>
    <name evidence="4" type="primary">aiiB</name>
    <name type="ordered locus">Atu6071</name>
    <name type="ORF">AGR_pTi_140</name>
</gene>
<proteinExistence type="evidence at protein level"/>
<organism>
    <name type="scientific">Agrobacterium fabrum (strain C58 / ATCC 33970)</name>
    <name type="common">Agrobacterium tumefaciens (strain C58)</name>
    <dbReference type="NCBI Taxonomy" id="176299"/>
    <lineage>
        <taxon>Bacteria</taxon>
        <taxon>Pseudomonadati</taxon>
        <taxon>Pseudomonadota</taxon>
        <taxon>Alphaproteobacteria</taxon>
        <taxon>Hyphomicrobiales</taxon>
        <taxon>Rhizobiaceae</taxon>
        <taxon>Rhizobium/Agrobacterium group</taxon>
        <taxon>Agrobacterium</taxon>
        <taxon>Agrobacterium tumefaciens complex</taxon>
    </lineage>
</organism>
<protein>
    <recommendedName>
        <fullName evidence="2">N-acyl homoserine lactonase AiiB</fullName>
        <shortName evidence="2">AHL-lactonase AiiB</shortName>
        <ecNumber>3.1.1.81</ecNumber>
    </recommendedName>
</protein>
<sequence>MGNKLFVLDLGEIRVDENFIIANSTFVTPQKPTVSSRLIDIPVSAYLIQCTDATVLYDTGCHPECMGTNGRWPAQSQLNAPYIGASECNLPERLRQLGLSPDDISTVVLSHLHNDHAGCVEYFGKSRLIAHEDEFATAVRYFATGDHSSPYIVKDIEAWLATPRNWDLVGRDERERELAPGVNLLNFGTGHASGMLGLAVRLEKQPGFLLVSDACYTATNYGPPARRAGVLHDTIGYDRTVSHIRQYAESRSLTVLFGHDREQFASLIKSTDGFYE</sequence>
<name>AHLLB_AGRFC</name>
<dbReference type="EC" id="3.1.1.81"/>
<dbReference type="EMBL" id="AE007871">
    <property type="protein sequence ID" value="AAK91031.1"/>
    <property type="molecule type" value="Genomic_DNA"/>
</dbReference>
<dbReference type="PIR" id="AE3236">
    <property type="entry name" value="AE3236"/>
</dbReference>
<dbReference type="RefSeq" id="NP_396590.1">
    <property type="nucleotide sequence ID" value="NC_003065.3"/>
</dbReference>
<dbReference type="RefSeq" id="WP_010974862.1">
    <property type="nucleotide sequence ID" value="NC_003065.3"/>
</dbReference>
<dbReference type="PDB" id="2R2D">
    <property type="method" value="X-ray"/>
    <property type="resolution" value="1.75 A"/>
    <property type="chains" value="A/B/C/D/E/F=1-276"/>
</dbReference>
<dbReference type="PDBsum" id="2R2D"/>
<dbReference type="SMR" id="A9CKY2"/>
<dbReference type="EnsemblBacteria" id="AAK91031">
    <property type="protein sequence ID" value="AAK91031"/>
    <property type="gene ID" value="Atu6071"/>
</dbReference>
<dbReference type="GeneID" id="1137394"/>
<dbReference type="KEGG" id="atu:Atu6071"/>
<dbReference type="PATRIC" id="fig|176299.10.peg.5278"/>
<dbReference type="HOGENOM" id="CLU_030571_3_2_5"/>
<dbReference type="OrthoDB" id="9773738at2"/>
<dbReference type="PhylomeDB" id="A9CKY2"/>
<dbReference type="BioCyc" id="AGRO:ATU6071-MONOMER"/>
<dbReference type="EvolutionaryTrace" id="A9CKY2"/>
<dbReference type="Proteomes" id="UP000000813">
    <property type="component" value="Plasmid Ti"/>
</dbReference>
<dbReference type="GO" id="GO:0102007">
    <property type="term" value="F:acyl-L-homoserine-lactone lactonohydrolase activity"/>
    <property type="evidence" value="ECO:0007669"/>
    <property type="project" value="UniProtKB-EC"/>
</dbReference>
<dbReference type="GO" id="GO:0046872">
    <property type="term" value="F:metal ion binding"/>
    <property type="evidence" value="ECO:0007669"/>
    <property type="project" value="UniProtKB-KW"/>
</dbReference>
<dbReference type="CDD" id="cd07729">
    <property type="entry name" value="AHL_lactonase_MBL-fold"/>
    <property type="match status" value="1"/>
</dbReference>
<dbReference type="Gene3D" id="3.60.15.10">
    <property type="entry name" value="Ribonuclease Z/Hydroxyacylglutathione hydrolase-like"/>
    <property type="match status" value="1"/>
</dbReference>
<dbReference type="InterPro" id="IPR051013">
    <property type="entry name" value="MBL_superfamily_lactonases"/>
</dbReference>
<dbReference type="InterPro" id="IPR001279">
    <property type="entry name" value="Metallo-B-lactamas"/>
</dbReference>
<dbReference type="InterPro" id="IPR036866">
    <property type="entry name" value="RibonucZ/Hydroxyglut_hydro"/>
</dbReference>
<dbReference type="PANTHER" id="PTHR42978:SF2">
    <property type="entry name" value="102 KBASES UNSTABLE REGION: FROM 1 TO 119443"/>
    <property type="match status" value="1"/>
</dbReference>
<dbReference type="PANTHER" id="PTHR42978">
    <property type="entry name" value="QUORUM-QUENCHING LACTONASE YTNP-RELATED-RELATED"/>
    <property type="match status" value="1"/>
</dbReference>
<dbReference type="Pfam" id="PF00753">
    <property type="entry name" value="Lactamase_B"/>
    <property type="match status" value="1"/>
</dbReference>
<dbReference type="SMART" id="SM00849">
    <property type="entry name" value="Lactamase_B"/>
    <property type="match status" value="1"/>
</dbReference>
<dbReference type="SUPFAM" id="SSF56281">
    <property type="entry name" value="Metallo-hydrolase/oxidoreductase"/>
    <property type="match status" value="1"/>
</dbReference>
<geneLocation type="plasmid" evidence="3 4">
    <name>pTiC58</name>
</geneLocation>
<comment type="catalytic activity">
    <reaction evidence="1">
        <text>an N-acyl-L-homoserine lactone + H2O = an N-acyl-L-homoserine + H(+)</text>
        <dbReference type="Rhea" id="RHEA:22576"/>
        <dbReference type="ChEBI" id="CHEBI:15377"/>
        <dbReference type="ChEBI" id="CHEBI:15378"/>
        <dbReference type="ChEBI" id="CHEBI:55474"/>
        <dbReference type="ChEBI" id="CHEBI:58921"/>
        <dbReference type="EC" id="3.1.1.81"/>
    </reaction>
</comment>
<comment type="cofactor">
    <cofactor evidence="1">
        <name>Zn(2+)</name>
        <dbReference type="ChEBI" id="CHEBI:29105"/>
    </cofactor>
    <text evidence="1">Binds 2 Zn(2+) ions per subunit.</text>
</comment>
<comment type="biophysicochemical properties">
    <kinetics>
        <KM evidence="1">15 mM for N-butyryl-(RS)-homoserine lactone (with zinc as cofactor)</KM>
        <KM evidence="1">1.6 mM for N-hexanoyl-(S)-homoserine lactone (with zinc as cofactor)</KM>
        <KM evidence="1">4.6 mM for N-(beta-ketocaproyl)-(RS)-homoserine lactone (with zinc as cofactor)</KM>
        <KM evidence="1">1 mM for N-octanoyl-(S)-homoserine lactone (with zinc as cofactor)</KM>
        <KM evidence="1">2.5 mM for N-(3-oxo-octanoyl)-(S)-homoserine lactone (with zinc as cofactor)</KM>
        <KM evidence="1">0.11 mM for N-decanoyl-(S)-homoserine lactone (with zinc as cofactor)</KM>
        <KM evidence="1">7.7 mM for N-t-butyloxycarbonyl-(RS)-homoserine lactone (with zinc as cofactor)</KM>
        <KM evidence="1">0.77 mM for N-carbobenzyloxy-(S)-homoserine lactone (with zinc as cofactor)</KM>
        <KM evidence="1">5.9 mM for N-hexanoyl-(S)-homoserine lactone (with cobalt as cofactor)</KM>
        <KM evidence="1">7.3 mM for N-(beta-ketocaproyl)-(RS)-homoserine lactone (with cobalt as cofactor)</KM>
        <KM evidence="1">7 mM for N-(3-oxo-octanoyl)-(S)-homoserine lactone (with cobalt as cofactor)</KM>
        <KM evidence="1">1.6 mM for N-carbobenzyloxy-(S)-homoserine lactone (with cobalt as cofactor)</KM>
    </kinetics>
</comment>
<comment type="similarity">
    <text evidence="3">Belongs to the metallo-beta-lactamase superfamily.</text>
</comment>
<keyword id="KW-0002">3D-structure</keyword>
<keyword id="KW-0378">Hydrolase</keyword>
<keyword id="KW-0479">Metal-binding</keyword>
<keyword id="KW-0614">Plasmid</keyword>
<keyword id="KW-1185">Reference proteome</keyword>
<keyword id="KW-0862">Zinc</keyword>
<accession>A9CKY2</accession>